<name>RL17_SYNE7</name>
<gene>
    <name evidence="1" type="primary">rplQ</name>
    <name evidence="1" type="synonym">rpl17</name>
    <name type="ordered locus">Synpcc7942_2208</name>
</gene>
<keyword id="KW-1185">Reference proteome</keyword>
<keyword id="KW-0687">Ribonucleoprotein</keyword>
<keyword id="KW-0689">Ribosomal protein</keyword>
<reference key="1">
    <citation type="submission" date="2005-08" db="EMBL/GenBank/DDBJ databases">
        <title>Complete sequence of chromosome 1 of Synechococcus elongatus PCC 7942.</title>
        <authorList>
            <consortium name="US DOE Joint Genome Institute"/>
            <person name="Copeland A."/>
            <person name="Lucas S."/>
            <person name="Lapidus A."/>
            <person name="Barry K."/>
            <person name="Detter J.C."/>
            <person name="Glavina T."/>
            <person name="Hammon N."/>
            <person name="Israni S."/>
            <person name="Pitluck S."/>
            <person name="Schmutz J."/>
            <person name="Larimer F."/>
            <person name="Land M."/>
            <person name="Kyrpides N."/>
            <person name="Lykidis A."/>
            <person name="Golden S."/>
            <person name="Richardson P."/>
        </authorList>
    </citation>
    <scope>NUCLEOTIDE SEQUENCE [LARGE SCALE GENOMIC DNA]</scope>
    <source>
        <strain>ATCC 33912 / PCC 7942 / FACHB-805</strain>
    </source>
</reference>
<protein>
    <recommendedName>
        <fullName evidence="1">Large ribosomal subunit protein bL17</fullName>
    </recommendedName>
    <alternativeName>
        <fullName evidence="2">50S ribosomal protein L17</fullName>
    </alternativeName>
</protein>
<comment type="subunit">
    <text evidence="1">Part of the 50S ribosomal subunit. Contacts protein L32.</text>
</comment>
<comment type="similarity">
    <text evidence="1">Belongs to the bacterial ribosomal protein bL17 family.</text>
</comment>
<organism>
    <name type="scientific">Synechococcus elongatus (strain ATCC 33912 / PCC 7942 / FACHB-805)</name>
    <name type="common">Anacystis nidulans R2</name>
    <dbReference type="NCBI Taxonomy" id="1140"/>
    <lineage>
        <taxon>Bacteria</taxon>
        <taxon>Bacillati</taxon>
        <taxon>Cyanobacteriota</taxon>
        <taxon>Cyanophyceae</taxon>
        <taxon>Synechococcales</taxon>
        <taxon>Synechococcaceae</taxon>
        <taxon>Synechococcus</taxon>
    </lineage>
</organism>
<proteinExistence type="inferred from homology"/>
<accession>Q31L31</accession>
<dbReference type="EMBL" id="CP000100">
    <property type="protein sequence ID" value="ABB58238.1"/>
    <property type="molecule type" value="Genomic_DNA"/>
</dbReference>
<dbReference type="RefSeq" id="WP_011244199.1">
    <property type="nucleotide sequence ID" value="NZ_JACJTX010000001.1"/>
</dbReference>
<dbReference type="SMR" id="Q31L31"/>
<dbReference type="STRING" id="1140.Synpcc7942_2208"/>
<dbReference type="PaxDb" id="1140-Synpcc7942_2208"/>
<dbReference type="GeneID" id="72431091"/>
<dbReference type="KEGG" id="syf:Synpcc7942_2208"/>
<dbReference type="eggNOG" id="COG0203">
    <property type="taxonomic scope" value="Bacteria"/>
</dbReference>
<dbReference type="HOGENOM" id="CLU_074407_2_2_3"/>
<dbReference type="OrthoDB" id="9809073at2"/>
<dbReference type="BioCyc" id="SYNEL:SYNPCC7942_2208-MONOMER"/>
<dbReference type="Proteomes" id="UP000889800">
    <property type="component" value="Chromosome"/>
</dbReference>
<dbReference type="GO" id="GO:0022625">
    <property type="term" value="C:cytosolic large ribosomal subunit"/>
    <property type="evidence" value="ECO:0007669"/>
    <property type="project" value="TreeGrafter"/>
</dbReference>
<dbReference type="GO" id="GO:0003735">
    <property type="term" value="F:structural constituent of ribosome"/>
    <property type="evidence" value="ECO:0007669"/>
    <property type="project" value="InterPro"/>
</dbReference>
<dbReference type="GO" id="GO:0006412">
    <property type="term" value="P:translation"/>
    <property type="evidence" value="ECO:0007669"/>
    <property type="project" value="UniProtKB-UniRule"/>
</dbReference>
<dbReference type="FunFam" id="3.90.1030.10:FF:000001">
    <property type="entry name" value="50S ribosomal protein L17"/>
    <property type="match status" value="1"/>
</dbReference>
<dbReference type="Gene3D" id="3.90.1030.10">
    <property type="entry name" value="Ribosomal protein L17"/>
    <property type="match status" value="1"/>
</dbReference>
<dbReference type="HAMAP" id="MF_01368">
    <property type="entry name" value="Ribosomal_bL17"/>
    <property type="match status" value="1"/>
</dbReference>
<dbReference type="InterPro" id="IPR000456">
    <property type="entry name" value="Ribosomal_bL17"/>
</dbReference>
<dbReference type="InterPro" id="IPR036373">
    <property type="entry name" value="Ribosomal_bL17_sf"/>
</dbReference>
<dbReference type="NCBIfam" id="TIGR00059">
    <property type="entry name" value="L17"/>
    <property type="match status" value="1"/>
</dbReference>
<dbReference type="PANTHER" id="PTHR14413:SF16">
    <property type="entry name" value="LARGE RIBOSOMAL SUBUNIT PROTEIN BL17M"/>
    <property type="match status" value="1"/>
</dbReference>
<dbReference type="PANTHER" id="PTHR14413">
    <property type="entry name" value="RIBOSOMAL PROTEIN L17"/>
    <property type="match status" value="1"/>
</dbReference>
<dbReference type="Pfam" id="PF01196">
    <property type="entry name" value="Ribosomal_L17"/>
    <property type="match status" value="1"/>
</dbReference>
<dbReference type="SUPFAM" id="SSF64263">
    <property type="entry name" value="Prokaryotic ribosomal protein L17"/>
    <property type="match status" value="1"/>
</dbReference>
<feature type="chain" id="PRO_0000267956" description="Large ribosomal subunit protein bL17">
    <location>
        <begin position="1"/>
        <end position="116"/>
    </location>
</feature>
<sequence length="116" mass="13262">MRHRCNVPQLGRPADQRKALLRSLTTEIIRNGTVTTTKARAKAVRSEVERMVTLAKDGSLAARRQALGYIYDKQLVHLLFEQAPERYAKRQGGYTRILRTVRRRGDNAEMAIIELT</sequence>
<evidence type="ECO:0000255" key="1">
    <source>
        <dbReference type="HAMAP-Rule" id="MF_01368"/>
    </source>
</evidence>
<evidence type="ECO:0000305" key="2"/>